<name>HMDH_CANAL</name>
<feature type="chain" id="PRO_0000454165" description="3-hydroxy-3-methylglutaryl-coenzyme A reductase 1">
    <location>
        <begin position="1"/>
        <end position="1073"/>
    </location>
</feature>
<feature type="transmembrane region" description="Helical" evidence="3">
    <location>
        <begin position="23"/>
        <end position="43"/>
    </location>
</feature>
<feature type="transmembrane region" description="Helical" evidence="3">
    <location>
        <begin position="181"/>
        <end position="201"/>
    </location>
</feature>
<feature type="transmembrane region" description="Helical" evidence="3">
    <location>
        <begin position="211"/>
        <end position="231"/>
    </location>
</feature>
<feature type="transmembrane region" description="Helical" evidence="3">
    <location>
        <begin position="298"/>
        <end position="318"/>
    </location>
</feature>
<feature type="transmembrane region" description="Helical" evidence="3">
    <location>
        <begin position="326"/>
        <end position="346"/>
    </location>
</feature>
<feature type="transmembrane region" description="Helical" evidence="3">
    <location>
        <begin position="399"/>
        <end position="419"/>
    </location>
</feature>
<feature type="transmembrane region" description="Helical" evidence="3">
    <location>
        <begin position="459"/>
        <end position="479"/>
    </location>
</feature>
<feature type="transmembrane region" description="Helical" evidence="3">
    <location>
        <begin position="498"/>
        <end position="518"/>
    </location>
</feature>
<feature type="transmembrane region" description="Helical" evidence="3">
    <location>
        <begin position="997"/>
        <end position="1017"/>
    </location>
</feature>
<feature type="domain" description="SSD" evidence="4">
    <location>
        <begin position="182"/>
        <end position="346"/>
    </location>
</feature>
<feature type="region of interest" description="Disordered" evidence="6">
    <location>
        <begin position="542"/>
        <end position="589"/>
    </location>
</feature>
<feature type="region of interest" description="Disordered" evidence="6">
    <location>
        <begin position="1025"/>
        <end position="1056"/>
    </location>
</feature>
<feature type="compositionally biased region" description="Low complexity" evidence="6">
    <location>
        <begin position="542"/>
        <end position="565"/>
    </location>
</feature>
<feature type="compositionally biased region" description="Acidic residues" evidence="6">
    <location>
        <begin position="579"/>
        <end position="589"/>
    </location>
</feature>
<feature type="compositionally biased region" description="Low complexity" evidence="6">
    <location>
        <begin position="1030"/>
        <end position="1042"/>
    </location>
</feature>
<feature type="compositionally biased region" description="Polar residues" evidence="6">
    <location>
        <begin position="1046"/>
        <end position="1055"/>
    </location>
</feature>
<feature type="active site" description="Charge relay system" evidence="1">
    <location>
        <position position="714"/>
    </location>
</feature>
<feature type="active site" description="Charge relay system" evidence="1">
    <location>
        <position position="848"/>
    </location>
</feature>
<feature type="active site" description="Charge relay system" evidence="1">
    <location>
        <position position="924"/>
    </location>
</feature>
<feature type="active site" description="Proton donor" evidence="5">
    <location>
        <position position="1022"/>
    </location>
</feature>
<feature type="binding site" evidence="1">
    <location>
        <begin position="720"/>
        <end position="726"/>
    </location>
    <ligand>
        <name>CoA</name>
        <dbReference type="ChEBI" id="CHEBI:57287"/>
    </ligand>
</feature>
<feature type="binding site" evidence="1">
    <location>
        <begin position="781"/>
        <end position="783"/>
    </location>
    <ligand>
        <name>NADP(+)</name>
        <dbReference type="ChEBI" id="CHEBI:58349"/>
    </ligand>
</feature>
<feature type="binding site" evidence="1">
    <location>
        <begin position="808"/>
        <end position="816"/>
    </location>
    <ligand>
        <name>NADP(+)</name>
        <dbReference type="ChEBI" id="CHEBI:58349"/>
    </ligand>
</feature>
<feature type="binding site" evidence="1">
    <location>
        <begin position="877"/>
        <end position="879"/>
    </location>
    <ligand>
        <name>CoA</name>
        <dbReference type="ChEBI" id="CHEBI:57287"/>
    </ligand>
</feature>
<feature type="binding site" evidence="1">
    <location>
        <begin position="1021"/>
        <end position="1022"/>
    </location>
    <ligand>
        <name>CoA</name>
        <dbReference type="ChEBI" id="CHEBI:57287"/>
    </ligand>
</feature>
<feature type="binding site" evidence="1">
    <location>
        <begin position="1026"/>
        <end position="1027"/>
    </location>
    <ligand>
        <name>NADP(+)</name>
        <dbReference type="ChEBI" id="CHEBI:58349"/>
    </ligand>
</feature>
<protein>
    <recommendedName>
        <fullName evidence="8">3-hydroxy-3-methylglutaryl-coenzyme A reductase 1</fullName>
        <shortName evidence="8">HMG-CoA reductase 1</shortName>
        <ecNumber evidence="10">1.1.1.34</ecNumber>
    </recommendedName>
</protein>
<comment type="function">
    <text evidence="2 10">HMG-CoA reductase; part of the first module of ergosterol biosynthesis pathway that includes the early steps of the pathway, conserved across all eukaryotes, and which results in the formation of mevalonate from acetyl-coenzyme A (acetyl-CoA) (By similarity). HMG1 catalyzes the reduction of hydroxymethylglutaryl-CoA (HMG-CoA) to mevalonate (By similarity). The first module starts with the action of the cytosolic acetyl-CoA acetyltransferase ERG10 that catalyzes the formation of acetoacetyl-CoA. The hydroxymethylglutaryl-CoA synthase ERG13 then condenses acetyl-CoA with acetoacetyl-CoA to form HMG-CoA. The 3-hydroxy-3-methylglutaryl-coenzyme A (HMG-CoA) reductase HMG1 finally reduces HMG-CoA to produce mevalonate (Probable).</text>
</comment>
<comment type="catalytic activity">
    <reaction evidence="10">
        <text>(R)-mevalonate + 2 NADP(+) + CoA = (3S)-3-hydroxy-3-methylglutaryl-CoA + 2 NADPH + 2 H(+)</text>
        <dbReference type="Rhea" id="RHEA:15989"/>
        <dbReference type="ChEBI" id="CHEBI:15378"/>
        <dbReference type="ChEBI" id="CHEBI:36464"/>
        <dbReference type="ChEBI" id="CHEBI:43074"/>
        <dbReference type="ChEBI" id="CHEBI:57287"/>
        <dbReference type="ChEBI" id="CHEBI:57783"/>
        <dbReference type="ChEBI" id="CHEBI:58349"/>
        <dbReference type="EC" id="1.1.1.34"/>
    </reaction>
    <physiologicalReaction direction="left-to-right" evidence="10">
        <dbReference type="Rhea" id="RHEA:15990"/>
    </physiologicalReaction>
</comment>
<comment type="pathway">
    <text evidence="10">Metabolic intermediate biosynthesis; (R)-mevalonate biosynthesis; (R)-mevalonate from acetyl-CoA: step 3/3.</text>
</comment>
<comment type="subcellular location">
    <subcellularLocation>
        <location evidence="2">Endoplasmic reticulum membrane</location>
        <topology evidence="3">Multi-pass membrane protein</topology>
    </subcellularLocation>
</comment>
<comment type="induction">
    <text evidence="7">Expression is not affected by lovastatin or fluconazole.</text>
</comment>
<comment type="similarity">
    <text evidence="9">Belongs to the HMG-CoA reductase family.</text>
</comment>
<reference key="1">
    <citation type="journal article" date="2004" name="Proc. Natl. Acad. Sci. U.S.A.">
        <title>The diploid genome sequence of Candida albicans.</title>
        <authorList>
            <person name="Jones T."/>
            <person name="Federspiel N.A."/>
            <person name="Chibana H."/>
            <person name="Dungan J."/>
            <person name="Kalman S."/>
            <person name="Magee B.B."/>
            <person name="Newport G."/>
            <person name="Thorstenson Y.R."/>
            <person name="Agabian N."/>
            <person name="Magee P.T."/>
            <person name="Davis R.W."/>
            <person name="Scherer S."/>
        </authorList>
    </citation>
    <scope>NUCLEOTIDE SEQUENCE [LARGE SCALE GENOMIC DNA]</scope>
    <source>
        <strain>SC5314 / ATCC MYA-2876</strain>
    </source>
</reference>
<reference key="2">
    <citation type="journal article" date="2007" name="Genome Biol.">
        <title>Assembly of the Candida albicans genome into sixteen supercontigs aligned on the eight chromosomes.</title>
        <authorList>
            <person name="van het Hoog M."/>
            <person name="Rast T.J."/>
            <person name="Martchenko M."/>
            <person name="Grindle S."/>
            <person name="Dignard D."/>
            <person name="Hogues H."/>
            <person name="Cuomo C."/>
            <person name="Berriman M."/>
            <person name="Scherer S."/>
            <person name="Magee B.B."/>
            <person name="Whiteway M."/>
            <person name="Chibana H."/>
            <person name="Nantel A."/>
            <person name="Magee P.T."/>
        </authorList>
    </citation>
    <scope>GENOME REANNOTATION</scope>
    <source>
        <strain>SC5314 / ATCC MYA-2876</strain>
    </source>
</reference>
<reference key="3">
    <citation type="journal article" date="2013" name="Genome Biol.">
        <title>Assembly of a phased diploid Candida albicans genome facilitates allele-specific measurements and provides a simple model for repeat and indel structure.</title>
        <authorList>
            <person name="Muzzey D."/>
            <person name="Schwartz K."/>
            <person name="Weissman J.S."/>
            <person name="Sherlock G."/>
        </authorList>
    </citation>
    <scope>NUCLEOTIDE SEQUENCE [LARGE SCALE GENOMIC DNA]</scope>
    <scope>GENOME REANNOTATION</scope>
    <source>
        <strain>SC5314 / ATCC MYA-2876</strain>
    </source>
</reference>
<reference key="4">
    <citation type="journal article" date="2003" name="Med. Mycol.">
        <title>Antifungal activity of fluconazole in combination with lovastatin and their effects on gene expression in the ergosterol and prenylation pathways in Candida albicans.</title>
        <authorList>
            <person name="Song J.L."/>
            <person name="Lyons C.N."/>
            <person name="Holleman S."/>
            <person name="Oliver B.G."/>
            <person name="White T.C."/>
        </authorList>
    </citation>
    <scope>FUNCTION</scope>
    <scope>INDUCTION</scope>
    <scope>PATHWAY</scope>
</reference>
<organism>
    <name type="scientific">Candida albicans (strain SC5314 / ATCC MYA-2876)</name>
    <name type="common">Yeast</name>
    <dbReference type="NCBI Taxonomy" id="237561"/>
    <lineage>
        <taxon>Eukaryota</taxon>
        <taxon>Fungi</taxon>
        <taxon>Dikarya</taxon>
        <taxon>Ascomycota</taxon>
        <taxon>Saccharomycotina</taxon>
        <taxon>Pichiomycetes</taxon>
        <taxon>Debaryomycetaceae</taxon>
        <taxon>Candida/Lodderomyces clade</taxon>
        <taxon>Candida</taxon>
    </lineage>
</organism>
<evidence type="ECO:0000250" key="1">
    <source>
        <dbReference type="UniProtKB" id="P04035"/>
    </source>
</evidence>
<evidence type="ECO:0000250" key="2">
    <source>
        <dbReference type="UniProtKB" id="P12683"/>
    </source>
</evidence>
<evidence type="ECO:0000255" key="3"/>
<evidence type="ECO:0000255" key="4">
    <source>
        <dbReference type="PROSITE-ProRule" id="PRU00199"/>
    </source>
</evidence>
<evidence type="ECO:0000255" key="5">
    <source>
        <dbReference type="PROSITE-ProRule" id="PRU10003"/>
    </source>
</evidence>
<evidence type="ECO:0000256" key="6">
    <source>
        <dbReference type="SAM" id="MobiDB-lite"/>
    </source>
</evidence>
<evidence type="ECO:0000269" key="7">
    <source>
    </source>
</evidence>
<evidence type="ECO:0000303" key="8">
    <source>
    </source>
</evidence>
<evidence type="ECO:0000305" key="9"/>
<evidence type="ECO:0000305" key="10">
    <source>
    </source>
</evidence>
<accession>A0A1D8PD39</accession>
<gene>
    <name evidence="8" type="primary">HMG1</name>
    <name type="ordered locus">orf19.1031</name>
    <name type="ORF">CAALFM_C103780CA</name>
</gene>
<keyword id="KW-0256">Endoplasmic reticulum</keyword>
<keyword id="KW-0444">Lipid biosynthesis</keyword>
<keyword id="KW-0443">Lipid metabolism</keyword>
<keyword id="KW-0472">Membrane</keyword>
<keyword id="KW-0521">NADP</keyword>
<keyword id="KW-0560">Oxidoreductase</keyword>
<keyword id="KW-1185">Reference proteome</keyword>
<keyword id="KW-0752">Steroid biosynthesis</keyword>
<keyword id="KW-0812">Transmembrane</keyword>
<keyword id="KW-1133">Transmembrane helix</keyword>
<dbReference type="EC" id="1.1.1.34" evidence="10"/>
<dbReference type="EMBL" id="CP017623">
    <property type="protein sequence ID" value="AOW26055.1"/>
    <property type="molecule type" value="Genomic_DNA"/>
</dbReference>
<dbReference type="RefSeq" id="XP_713636.2">
    <property type="nucleotide sequence ID" value="XM_708543.2"/>
</dbReference>
<dbReference type="SMR" id="A0A1D8PD39"/>
<dbReference type="FunCoup" id="A0A1D8PD39">
    <property type="interactions" value="302"/>
</dbReference>
<dbReference type="STRING" id="237561.A0A1D8PD39"/>
<dbReference type="EnsemblFungi" id="C1_03780C_A-T">
    <property type="protein sequence ID" value="C1_03780C_A-T-p1"/>
    <property type="gene ID" value="C1_03780C_A"/>
</dbReference>
<dbReference type="GeneID" id="3644687"/>
<dbReference type="KEGG" id="cal:CAALFM_C103780CA"/>
<dbReference type="CGD" id="CAL0000177752">
    <property type="gene designation" value="HMG1"/>
</dbReference>
<dbReference type="VEuPathDB" id="FungiDB:C1_03780C_A"/>
<dbReference type="eggNOG" id="KOG2480">
    <property type="taxonomic scope" value="Eukaryota"/>
</dbReference>
<dbReference type="InParanoid" id="A0A1D8PD39"/>
<dbReference type="OrthoDB" id="310654at2759"/>
<dbReference type="UniPathway" id="UPA00058">
    <property type="reaction ID" value="UER00103"/>
</dbReference>
<dbReference type="Proteomes" id="UP000000559">
    <property type="component" value="Chromosome 1"/>
</dbReference>
<dbReference type="GO" id="GO:0005789">
    <property type="term" value="C:endoplasmic reticulum membrane"/>
    <property type="evidence" value="ECO:0000318"/>
    <property type="project" value="GO_Central"/>
</dbReference>
<dbReference type="GO" id="GO:0005778">
    <property type="term" value="C:peroxisomal membrane"/>
    <property type="evidence" value="ECO:0000318"/>
    <property type="project" value="GO_Central"/>
</dbReference>
<dbReference type="GO" id="GO:0005886">
    <property type="term" value="C:plasma membrane"/>
    <property type="evidence" value="ECO:0000314"/>
    <property type="project" value="CGD"/>
</dbReference>
<dbReference type="GO" id="GO:0004420">
    <property type="term" value="F:hydroxymethylglutaryl-CoA reductase (NADPH) activity"/>
    <property type="evidence" value="ECO:0000318"/>
    <property type="project" value="GO_Central"/>
</dbReference>
<dbReference type="GO" id="GO:0015936">
    <property type="term" value="P:coenzyme A metabolic process"/>
    <property type="evidence" value="ECO:0007669"/>
    <property type="project" value="InterPro"/>
</dbReference>
<dbReference type="GO" id="GO:0006696">
    <property type="term" value="P:ergosterol biosynthetic process"/>
    <property type="evidence" value="ECO:0000318"/>
    <property type="project" value="GO_Central"/>
</dbReference>
<dbReference type="GO" id="GO:0008299">
    <property type="term" value="P:isoprenoid biosynthetic process"/>
    <property type="evidence" value="ECO:0000318"/>
    <property type="project" value="GO_Central"/>
</dbReference>
<dbReference type="GO" id="GO:0016126">
    <property type="term" value="P:sterol biosynthetic process"/>
    <property type="evidence" value="ECO:0000303"/>
    <property type="project" value="CGD"/>
</dbReference>
<dbReference type="CDD" id="cd00643">
    <property type="entry name" value="HMG-CoA_reductase_classI"/>
    <property type="match status" value="1"/>
</dbReference>
<dbReference type="FunFam" id="1.10.3270.10:FF:000001">
    <property type="entry name" value="3-hydroxy-3-methylglutaryl coenzyme A reductase"/>
    <property type="match status" value="1"/>
</dbReference>
<dbReference type="FunFam" id="3.30.70.420:FF:000001">
    <property type="entry name" value="3-hydroxy-3-methylglutaryl coenzyme A reductase"/>
    <property type="match status" value="1"/>
</dbReference>
<dbReference type="FunFam" id="3.90.770.10:FF:000001">
    <property type="entry name" value="3-hydroxy-3-methylglutaryl coenzyme A reductase"/>
    <property type="match status" value="1"/>
</dbReference>
<dbReference type="Gene3D" id="3.90.770.10">
    <property type="entry name" value="3-hydroxy-3-methylglutaryl-coenzyme A Reductase, Chain A, domain 2"/>
    <property type="match status" value="1"/>
</dbReference>
<dbReference type="Gene3D" id="1.10.3270.10">
    <property type="entry name" value="HMGR, N-terminal domain"/>
    <property type="match status" value="1"/>
</dbReference>
<dbReference type="Gene3D" id="3.30.70.420">
    <property type="entry name" value="Hydroxymethylglutaryl-CoA reductase, class I/II, NAD/NADP-binding domain"/>
    <property type="match status" value="1"/>
</dbReference>
<dbReference type="InterPro" id="IPR025583">
    <property type="entry name" value="HMG-CoA_N_dom"/>
</dbReference>
<dbReference type="InterPro" id="IPR002202">
    <property type="entry name" value="HMG_CoA_Rdtase"/>
</dbReference>
<dbReference type="InterPro" id="IPR023074">
    <property type="entry name" value="HMG_CoA_Rdtase_cat_sf"/>
</dbReference>
<dbReference type="InterPro" id="IPR023076">
    <property type="entry name" value="HMG_CoA_Rdtase_CS"/>
</dbReference>
<dbReference type="InterPro" id="IPR004554">
    <property type="entry name" value="HMG_CoA_Rdtase_eu_arc"/>
</dbReference>
<dbReference type="InterPro" id="IPR023282">
    <property type="entry name" value="HMG_CoA_Rdtase_N"/>
</dbReference>
<dbReference type="InterPro" id="IPR009023">
    <property type="entry name" value="HMG_CoA_Rdtase_NAD(P)-bd_sf"/>
</dbReference>
<dbReference type="InterPro" id="IPR009029">
    <property type="entry name" value="HMG_CoA_Rdtase_sub-bd_dom_sf"/>
</dbReference>
<dbReference type="InterPro" id="IPR053958">
    <property type="entry name" value="HMGCR/SNAP/NPC1-like_SSD"/>
</dbReference>
<dbReference type="InterPro" id="IPR000731">
    <property type="entry name" value="SSD"/>
</dbReference>
<dbReference type="NCBIfam" id="TIGR00533">
    <property type="entry name" value="HMG_CoA_R_NADP"/>
    <property type="match status" value="1"/>
</dbReference>
<dbReference type="PANTHER" id="PTHR10572">
    <property type="entry name" value="3-HYDROXY-3-METHYLGLUTARYL-COENZYME A REDUCTASE"/>
    <property type="match status" value="1"/>
</dbReference>
<dbReference type="PANTHER" id="PTHR10572:SF24">
    <property type="entry name" value="3-HYDROXY-3-METHYLGLUTARYL-COENZYME A REDUCTASE"/>
    <property type="match status" value="1"/>
</dbReference>
<dbReference type="Pfam" id="PF00368">
    <property type="entry name" value="HMG-CoA_red"/>
    <property type="match status" value="1"/>
</dbReference>
<dbReference type="Pfam" id="PF13323">
    <property type="entry name" value="HPIH"/>
    <property type="match status" value="1"/>
</dbReference>
<dbReference type="Pfam" id="PF12349">
    <property type="entry name" value="Sterol-sensing"/>
    <property type="match status" value="1"/>
</dbReference>
<dbReference type="PRINTS" id="PR00071">
    <property type="entry name" value="HMGCOARDTASE"/>
</dbReference>
<dbReference type="SUPFAM" id="SSF55035">
    <property type="entry name" value="NAD-binding domain of HMG-CoA reductase"/>
    <property type="match status" value="1"/>
</dbReference>
<dbReference type="SUPFAM" id="SSF56542">
    <property type="entry name" value="Substrate-binding domain of HMG-CoA reductase"/>
    <property type="match status" value="1"/>
</dbReference>
<dbReference type="PROSITE" id="PS00066">
    <property type="entry name" value="HMG_COA_REDUCTASE_1"/>
    <property type="match status" value="1"/>
</dbReference>
<dbReference type="PROSITE" id="PS00318">
    <property type="entry name" value="HMG_COA_REDUCTASE_2"/>
    <property type="match status" value="1"/>
</dbReference>
<dbReference type="PROSITE" id="PS01192">
    <property type="entry name" value="HMG_COA_REDUCTASE_3"/>
    <property type="match status" value="1"/>
</dbReference>
<dbReference type="PROSITE" id="PS50065">
    <property type="entry name" value="HMG_COA_REDUCTASE_4"/>
    <property type="match status" value="1"/>
</dbReference>
<dbReference type="PROSITE" id="PS50156">
    <property type="entry name" value="SSD"/>
    <property type="match status" value="1"/>
</dbReference>
<sequence>MLSFLTEVTGAIAQTSARRPIQFMVVPALLASIAYLSIIDDYIPEHIKSSSGSSGISYYHPYTSSHYKSQPDLDKWTAIDKEHINDDIYTQANQISVIPLRFRRFQDVVPNVPNAIHISDNEQILIVPTDQIENSLDQLQEITNNGITWKARNNDKLAKYYDYIRYGLNKVQDAIQHAENFDILLIFVAYLGMWYALIKVFVDMRKIGSKFWLAFSTLTSSTFAFLLALLVSNKFLHTKVSLLSLSEGIPFLVSVIGFKHKVSIATIVANSSTASPEDVPHVVGKAVSSHCLSMLRDHLVVIGGLLSCAIYAHHLTGLRNFCILSSLILSFDLILVYTFFSAILGLKVEINRARRTEDLQNALEEEGISSLVAARVAEQSATIEHPNEHNFFKSNNSSIAYFKVIMSLGFFAFHAFWLGSSWLYSTTDGGESFSRFSFLSNIPTLSQDISQQIPIGRKGTVVTILPTIFFMPSGFMVQLEDFIYLVLSKFSSAIRDSIISKFLVFGFALSIVTNVYFLNAARYQVSATHKLIEKEISRPQDSSVTATTTTTATGTTSSGAATSKTIGNNKGLKSVQEIPDNEDESSDEELEIKAPVKVLPLEECVKVLKEGKVKTLSNDEVSSLVVGGKLPLYALEKQLADNKRAVIVRRKAIAKLANAPVLDTNRLPYAHYDYDRVFGACCENVIGYMPLPVGVAGPLIIDEKPYHIPMATTEGCLVASTMRGCKAINAGGGVETVLTRDGMTRGPCVRFPTLKRAGAAKLWIDSEQGQATIKKAFNSTSRFARLQHIQTALAGTSLFIRFRTTTGDAMGMNMISKGVEYSLKYMVEECGWDDMEIVSVSGNYCTDKKPAAINWIEGRGKSIVAAARIPADVVTKVLKSDVDALVELNISKNLVGSAMAGSVGGFNAHAANLVTAVYLACGQDPAQNVESSNCITLMEKDKETGDLNVSVSMPSIEVGTIGGGTILEPQGAMLDLLGVRGPHPTNPGANAQQLAKIVASAVLAAELSLCSALAAGHLVQSHMQHNRSKAPAAGATTTTTPAITDSKASNGSIASNGKDLKRLEEGSVTCIKS</sequence>
<proteinExistence type="evidence at transcript level"/>